<protein>
    <recommendedName>
        <fullName evidence="15 17">Omega-hydroxyceramide transacylase</fullName>
        <ecNumber evidence="9 11">2.3.1.296</ecNumber>
    </recommendedName>
    <alternativeName>
        <fullName evidence="18">Patatin-like phospholipase domain-containing protein 1</fullName>
    </alternativeName>
</protein>
<sequence length="532" mass="57875">MEEQVFKGDPDTPHSISFSGSGFLSFYQAGAVDALRDLAPRMLETAHRFAGTSAGAVIAALAICGIEMDEYLRVLNVGVAEVKKSFLGPLSPSCKMVQMMRQFLYRVLPEDSYKVTTGKLHVSLTRLTDGENVVVSEFTSKEELIEALYCSCFVPVYCGLIPPTYRGVRYIDGGFTGMQPCAFWTDAITISTFSGQQDICPRDCPAIFHDFRMFNCSFQFSLENIARMTHALFPPDLVILHDYYYRGYEDAVLYLRRLNAVYLNSSSKRVIFPRVEVYCQIELALGNECPERSQPSLRARQASLEGATQPHKEWVPKGDGRGSHGPPVSQPVQTLEFTCESPVSAPVSPLEQPPAQPLASSTPLSLSGMPPVSFPAVHKPPSSTPGSSLPTPPPGLSPLSPQQQVQPSGSPARSLHSQAPTSPRPSLGPSTVGAPQTLPRSSLSAFPAQPPVEELGQEQPQAVALLVSSKPKSAVPLVHVKETVSKPYVTESPAEDSNWVNKVFKKNKQKTSGTRKGFPRHSGSKKPSSKVQ</sequence>
<name>PLPL1_HUMAN</name>
<evidence type="ECO:0000250" key="1">
    <source>
        <dbReference type="UniProtKB" id="Q3V1D5"/>
    </source>
</evidence>
<evidence type="ECO:0000255" key="2">
    <source>
        <dbReference type="PROSITE-ProRule" id="PRU01161"/>
    </source>
</evidence>
<evidence type="ECO:0000256" key="3">
    <source>
        <dbReference type="SAM" id="MobiDB-lite"/>
    </source>
</evidence>
<evidence type="ECO:0000269" key="4">
    <source>
    </source>
</evidence>
<evidence type="ECO:0000269" key="5">
    <source>
    </source>
</evidence>
<evidence type="ECO:0000269" key="6">
    <source>
    </source>
</evidence>
<evidence type="ECO:0000269" key="7">
    <source>
    </source>
</evidence>
<evidence type="ECO:0000269" key="8">
    <source>
    </source>
</evidence>
<evidence type="ECO:0000269" key="9">
    <source>
    </source>
</evidence>
<evidence type="ECO:0000269" key="10">
    <source>
    </source>
</evidence>
<evidence type="ECO:0000269" key="11">
    <source>
    </source>
</evidence>
<evidence type="ECO:0000303" key="12">
    <source>
    </source>
</evidence>
<evidence type="ECO:0000303" key="13">
    <source>
    </source>
</evidence>
<evidence type="ECO:0000305" key="14"/>
<evidence type="ECO:0000305" key="15">
    <source>
    </source>
</evidence>
<evidence type="ECO:0000305" key="16">
    <source>
    </source>
</evidence>
<evidence type="ECO:0000305" key="17">
    <source>
    </source>
</evidence>
<evidence type="ECO:0000312" key="18">
    <source>
        <dbReference type="HGNC" id="HGNC:21246"/>
    </source>
</evidence>
<dbReference type="EC" id="2.3.1.296" evidence="9 11"/>
<dbReference type="EMBL" id="AM182887">
    <property type="protein sequence ID" value="CAJ58679.1"/>
    <property type="molecule type" value="mRNA"/>
</dbReference>
<dbReference type="EMBL" id="AK096074">
    <property type="protein sequence ID" value="BAC04697.1"/>
    <property type="molecule type" value="mRNA"/>
</dbReference>
<dbReference type="EMBL" id="Z84484">
    <property type="status" value="NOT_ANNOTATED_CDS"/>
    <property type="molecule type" value="Genomic_DNA"/>
</dbReference>
<dbReference type="EMBL" id="BC103905">
    <property type="protein sequence ID" value="AAI03906.1"/>
    <property type="molecule type" value="mRNA"/>
</dbReference>
<dbReference type="EMBL" id="BC103906">
    <property type="protein sequence ID" value="AAI03907.1"/>
    <property type="molecule type" value="mRNA"/>
</dbReference>
<dbReference type="EMBL" id="BC103907">
    <property type="protein sequence ID" value="AAI03908.1"/>
    <property type="molecule type" value="mRNA"/>
</dbReference>
<dbReference type="CCDS" id="CCDS34438.1">
    <molecule id="Q8N8W4-2"/>
</dbReference>
<dbReference type="CCDS" id="CCDS47416.1">
    <molecule id="Q8N8W4-3"/>
</dbReference>
<dbReference type="CCDS" id="CCDS54997.1">
    <molecule id="Q8N8W4-1"/>
</dbReference>
<dbReference type="RefSeq" id="NP_001139188.1">
    <molecule id="Q8N8W4-3"/>
    <property type="nucleotide sequence ID" value="NM_001145716.2"/>
</dbReference>
<dbReference type="RefSeq" id="NP_001139189.2">
    <molecule id="Q8N8W4-1"/>
    <property type="nucleotide sequence ID" value="NM_001145717.1"/>
</dbReference>
<dbReference type="RefSeq" id="NP_775947.2">
    <molecule id="Q8N8W4-2"/>
    <property type="nucleotide sequence ID" value="NM_173676.2"/>
</dbReference>
<dbReference type="SMR" id="Q8N8W4"/>
<dbReference type="BioGRID" id="130231">
    <property type="interactions" value="24"/>
</dbReference>
<dbReference type="FunCoup" id="Q8N8W4">
    <property type="interactions" value="43"/>
</dbReference>
<dbReference type="IntAct" id="Q8N8W4">
    <property type="interactions" value="19"/>
</dbReference>
<dbReference type="STRING" id="9606.ENSP00000378072"/>
<dbReference type="SwissLipids" id="SLP:000001823"/>
<dbReference type="GlyGen" id="Q8N8W4">
    <property type="glycosylation" value="2 sites"/>
</dbReference>
<dbReference type="iPTMnet" id="Q8N8W4"/>
<dbReference type="PhosphoSitePlus" id="Q8N8W4"/>
<dbReference type="BioMuta" id="PNPLA1"/>
<dbReference type="DMDM" id="296452995"/>
<dbReference type="MassIVE" id="Q8N8W4"/>
<dbReference type="PaxDb" id="9606-ENSP00000378072"/>
<dbReference type="PeptideAtlas" id="Q8N8W4"/>
<dbReference type="Antibodypedia" id="29651">
    <property type="antibodies" value="122 antibodies from 16 providers"/>
</dbReference>
<dbReference type="DNASU" id="285848"/>
<dbReference type="Ensembl" id="ENST00000312917.9">
    <molecule id="Q8N8W4-3"/>
    <property type="protein sequence ID" value="ENSP00000321116.5"/>
    <property type="gene ID" value="ENSG00000180316.13"/>
</dbReference>
<dbReference type="Ensembl" id="ENST00000388715.7">
    <molecule id="Q8N8W4-2"/>
    <property type="protein sequence ID" value="ENSP00000373367.3"/>
    <property type="gene ID" value="ENSG00000180316.13"/>
</dbReference>
<dbReference type="Ensembl" id="ENST00000394571.3">
    <molecule id="Q8N8W4-1"/>
    <property type="protein sequence ID" value="ENSP00000378072.2"/>
    <property type="gene ID" value="ENSG00000180316.13"/>
</dbReference>
<dbReference type="GeneID" id="285848"/>
<dbReference type="KEGG" id="hsa:285848"/>
<dbReference type="UCSC" id="uc003olw.2">
    <molecule id="Q8N8W4-1"/>
    <property type="organism name" value="human"/>
</dbReference>
<dbReference type="AGR" id="HGNC:21246"/>
<dbReference type="CTD" id="285848"/>
<dbReference type="DisGeNET" id="285848"/>
<dbReference type="GeneCards" id="PNPLA1"/>
<dbReference type="GeneReviews" id="PNPLA1"/>
<dbReference type="HGNC" id="HGNC:21246">
    <property type="gene designation" value="PNPLA1"/>
</dbReference>
<dbReference type="HPA" id="ENSG00000180316">
    <property type="expression patterns" value="Tissue enriched (skin)"/>
</dbReference>
<dbReference type="MalaCards" id="PNPLA1"/>
<dbReference type="MIM" id="612121">
    <property type="type" value="gene"/>
</dbReference>
<dbReference type="MIM" id="615024">
    <property type="type" value="phenotype"/>
</dbReference>
<dbReference type="neXtProt" id="NX_Q8N8W4"/>
<dbReference type="OpenTargets" id="ENSG00000180316"/>
<dbReference type="Orphanet" id="79394">
    <property type="disease" value="Congenital ichthyosiform erythroderma"/>
</dbReference>
<dbReference type="PharmGKB" id="PA134887192"/>
<dbReference type="VEuPathDB" id="HostDB:ENSG00000180316"/>
<dbReference type="eggNOG" id="KOG3773">
    <property type="taxonomic scope" value="Eukaryota"/>
</dbReference>
<dbReference type="GeneTree" id="ENSGT00940000160828"/>
<dbReference type="InParanoid" id="Q8N8W4"/>
<dbReference type="OrthoDB" id="197155at2759"/>
<dbReference type="PAN-GO" id="Q8N8W4">
    <property type="GO annotations" value="6 GO annotations based on evolutionary models"/>
</dbReference>
<dbReference type="PhylomeDB" id="Q8N8W4"/>
<dbReference type="TreeFam" id="TF314272"/>
<dbReference type="BioCyc" id="MetaCyc:ENSG00000180316-MONOMER"/>
<dbReference type="BRENDA" id="2.3.1.296">
    <property type="organism ID" value="2681"/>
</dbReference>
<dbReference type="PathwayCommons" id="Q8N8W4"/>
<dbReference type="SignaLink" id="Q8N8W4"/>
<dbReference type="BioGRID-ORCS" id="285848">
    <property type="hits" value="16 hits in 1146 CRISPR screens"/>
</dbReference>
<dbReference type="ChiTaRS" id="PNPLA1">
    <property type="organism name" value="human"/>
</dbReference>
<dbReference type="GenomeRNAi" id="285848"/>
<dbReference type="Pharos" id="Q8N8W4">
    <property type="development level" value="Tbio"/>
</dbReference>
<dbReference type="PRO" id="PR:Q8N8W4"/>
<dbReference type="Proteomes" id="UP000005640">
    <property type="component" value="Chromosome 6"/>
</dbReference>
<dbReference type="RNAct" id="Q8N8W4">
    <property type="molecule type" value="protein"/>
</dbReference>
<dbReference type="Bgee" id="ENSG00000180316">
    <property type="expression patterns" value="Expressed in skin of abdomen and 73 other cell types or tissues"/>
</dbReference>
<dbReference type="ExpressionAtlas" id="Q8N8W4">
    <property type="expression patterns" value="baseline and differential"/>
</dbReference>
<dbReference type="GO" id="GO:0005737">
    <property type="term" value="C:cytoplasm"/>
    <property type="evidence" value="ECO:0000314"/>
    <property type="project" value="UniProtKB"/>
</dbReference>
<dbReference type="GO" id="GO:0005811">
    <property type="term" value="C:lipid droplet"/>
    <property type="evidence" value="ECO:0000318"/>
    <property type="project" value="GO_Central"/>
</dbReference>
<dbReference type="GO" id="GO:0016020">
    <property type="term" value="C:membrane"/>
    <property type="evidence" value="ECO:0000318"/>
    <property type="project" value="GO_Central"/>
</dbReference>
<dbReference type="GO" id="GO:0016747">
    <property type="term" value="F:acyltransferase activity, transferring groups other than amino-acyl groups"/>
    <property type="evidence" value="ECO:0000315"/>
    <property type="project" value="UniProtKB"/>
</dbReference>
<dbReference type="GO" id="GO:0106341">
    <property type="term" value="F:omega-hydroxyceramide transacylase activity"/>
    <property type="evidence" value="ECO:0000314"/>
    <property type="project" value="UniProtKB"/>
</dbReference>
<dbReference type="GO" id="GO:0030280">
    <property type="term" value="F:structural constituent of skin epidermis"/>
    <property type="evidence" value="ECO:0000305"/>
    <property type="project" value="UniProtKB"/>
</dbReference>
<dbReference type="GO" id="GO:0004806">
    <property type="term" value="F:triacylglycerol lipase activity"/>
    <property type="evidence" value="ECO:0000318"/>
    <property type="project" value="GO_Central"/>
</dbReference>
<dbReference type="GO" id="GO:0046513">
    <property type="term" value="P:ceramide biosynthetic process"/>
    <property type="evidence" value="ECO:0000315"/>
    <property type="project" value="UniProtKB"/>
</dbReference>
<dbReference type="GO" id="GO:0055088">
    <property type="term" value="P:lipid homeostasis"/>
    <property type="evidence" value="ECO:0000318"/>
    <property type="project" value="GO_Central"/>
</dbReference>
<dbReference type="GO" id="GO:0106342">
    <property type="term" value="P:omega-hydroxyceramide biosynthetic process"/>
    <property type="evidence" value="ECO:0000315"/>
    <property type="project" value="UniProtKB"/>
</dbReference>
<dbReference type="GO" id="GO:0019433">
    <property type="term" value="P:triglyceride catabolic process"/>
    <property type="evidence" value="ECO:0000318"/>
    <property type="project" value="GO_Central"/>
</dbReference>
<dbReference type="CDD" id="cd07219">
    <property type="entry name" value="Pat_PNPLA1"/>
    <property type="match status" value="1"/>
</dbReference>
<dbReference type="FunFam" id="3.40.1090.10:FF:000014">
    <property type="entry name" value="Patatin like phospholipase domain containing 1"/>
    <property type="match status" value="1"/>
</dbReference>
<dbReference type="FunFam" id="3.40.1090.10:FF:000016">
    <property type="entry name" value="Patatin like phospholipase domain containing 1"/>
    <property type="match status" value="1"/>
</dbReference>
<dbReference type="Gene3D" id="3.40.1090.10">
    <property type="entry name" value="Cytosolic phospholipase A2 catalytic domain"/>
    <property type="match status" value="2"/>
</dbReference>
<dbReference type="InterPro" id="IPR016035">
    <property type="entry name" value="Acyl_Trfase/lysoPLipase"/>
</dbReference>
<dbReference type="InterPro" id="IPR033562">
    <property type="entry name" value="PLPL"/>
</dbReference>
<dbReference type="InterPro" id="IPR039180">
    <property type="entry name" value="PNPLA1"/>
</dbReference>
<dbReference type="InterPro" id="IPR002641">
    <property type="entry name" value="PNPLA_dom"/>
</dbReference>
<dbReference type="PANTHER" id="PTHR12406">
    <property type="entry name" value="CALCIUM-INDEPENDENT PHOSPHOLIPASE A2 IPLA2 -RELATED"/>
    <property type="match status" value="1"/>
</dbReference>
<dbReference type="PANTHER" id="PTHR12406:SF23">
    <property type="entry name" value="OMEGA-HYDROXYCERAMIDE TRANSACYLASE"/>
    <property type="match status" value="1"/>
</dbReference>
<dbReference type="Pfam" id="PF01734">
    <property type="entry name" value="Patatin"/>
    <property type="match status" value="1"/>
</dbReference>
<dbReference type="SUPFAM" id="SSF52151">
    <property type="entry name" value="FabD/lysophospholipase-like"/>
    <property type="match status" value="1"/>
</dbReference>
<dbReference type="PROSITE" id="PS51635">
    <property type="entry name" value="PNPLA"/>
    <property type="match status" value="1"/>
</dbReference>
<gene>
    <name evidence="18" type="primary">PNPLA1</name>
</gene>
<comment type="function">
    <text evidence="1 7 9 11">Omega-hydroxyceramide transacylase involved in the synthesis of omega-O-acylceramides (esterified omega-hydroxyacyl-sphingosine; EOS), which are extremely hydrophobic lipids involved in skin barrier formation (PubMed:27751867, PubMed:28248318). Catalyzes the last step of the synthesis of omega-O-acylceramides by transferring linoleic acid from triglycerides to an omega-hydroxyceramide (PubMed:27751867, PubMed:28248318). Omega-O-acylceramides, are required for the biogenesis of lipid lamellae in the stratum corneum and the formation of the cornified lipid envelope which are essential for the epidermis barrier function (PubMed:22246504, PubMed:27751867, PubMed:28248318). These lipids also play a role in keratinocyte differentiation (By similarity). May also act on omega-hydroxylated ultra-long chain fatty acids (omega-OH ULCFA) and acylglucosylceramides (GlcEOS) (By similarity).</text>
</comment>
<comment type="catalytic activity">
    <reaction evidence="11">
        <text>an N-(omega-hydroxy-ultra-long chain fatty acyl)-sphingoid base + a (9Z,12Z)-octadecadienoyl-containing triacyl-sn-glycerol = an N-[omega-(9Z,12Z-octadecadienoyloxy)-O-ultra-long chain fatty acyl]-sphingoid base + a diacylglycerol</text>
        <dbReference type="Rhea" id="RHEA:61528"/>
        <dbReference type="ChEBI" id="CHEBI:18035"/>
        <dbReference type="ChEBI" id="CHEBI:144774"/>
        <dbReference type="ChEBI" id="CHEBI:144784"/>
        <dbReference type="ChEBI" id="CHEBI:144785"/>
        <dbReference type="EC" id="2.3.1.296"/>
    </reaction>
    <physiologicalReaction direction="left-to-right" evidence="17">
        <dbReference type="Rhea" id="RHEA:61529"/>
    </physiologicalReaction>
</comment>
<comment type="catalytic activity">
    <reaction evidence="15 16">
        <text>an N-(omega-hydroxy-ultra-long chain fatty acyl)-sphing-4-enine + a (9Z,12Z)-octadecadienoyl-containing triacyl-sn-glycerol = an N-(omega-(9Z,12Z-octadecadienoyloxy)-ultra-long chain fatty acyl)-sphing-4-enine + a diacylglycerol</text>
        <dbReference type="Rhea" id="RHEA:65692"/>
        <dbReference type="ChEBI" id="CHEBI:18035"/>
        <dbReference type="ChEBI" id="CHEBI:144774"/>
        <dbReference type="ChEBI" id="CHEBI:157662"/>
        <dbReference type="ChEBI" id="CHEBI:157663"/>
    </reaction>
    <physiologicalReaction direction="left-to-right" evidence="15 16">
        <dbReference type="Rhea" id="RHEA:65693"/>
    </physiologicalReaction>
</comment>
<comment type="catalytic activity">
    <reaction evidence="11">
        <text>N-(30-hydroxytriacontanoyl)-sphing-4-enine + 1,2,3-tri-(9Z,12Z)-octadecadienoylglycerol = N-[30-(9Z,12Z-octadecadienoyloxy)-triacontanoyl]-sphing-4-enine + di-(9Z,12Z)-octadecadienoylglycerol</text>
        <dbReference type="Rhea" id="RHEA:55264"/>
        <dbReference type="ChEBI" id="CHEBI:34862"/>
        <dbReference type="ChEBI" id="CHEBI:75844"/>
        <dbReference type="ChEBI" id="CHEBI:138658"/>
        <dbReference type="ChEBI" id="CHEBI:138664"/>
    </reaction>
    <physiologicalReaction direction="left-to-right" evidence="17">
        <dbReference type="Rhea" id="RHEA:55265"/>
    </physiologicalReaction>
</comment>
<comment type="catalytic activity">
    <reaction evidence="1">
        <text>N-(28-hydroxyoctacosanoyl)-sphing-4-enine + a (9Z,12Z)-octadecadienoyl-containing triacyl-sn-glycerol = N-(28-(9Z,12Z-octadecadienoyloxy)-octacosanoyl)-sphing-4-enine + a diacylglycerol</text>
        <dbReference type="Rhea" id="RHEA:65648"/>
        <dbReference type="ChEBI" id="CHEBI:18035"/>
        <dbReference type="ChEBI" id="CHEBI:144774"/>
        <dbReference type="ChEBI" id="CHEBI:157643"/>
        <dbReference type="ChEBI" id="CHEBI:157652"/>
    </reaction>
    <physiologicalReaction direction="left-to-right" evidence="1">
        <dbReference type="Rhea" id="RHEA:65649"/>
    </physiologicalReaction>
</comment>
<comment type="catalytic activity">
    <reaction evidence="1">
        <text>N-(32-hydroxydotriacontanoyl)-sphing-4-enine + a (9Z,12Z)-octadecadienoyl-containing triacyl-sn-glycerol = N-(32-(9Z,12Z-octadecadienoyloxy)-dotricontanoyl)-sphing-4-enine + a diacylglycerol</text>
        <dbReference type="Rhea" id="RHEA:65652"/>
        <dbReference type="ChEBI" id="CHEBI:18035"/>
        <dbReference type="ChEBI" id="CHEBI:144774"/>
        <dbReference type="ChEBI" id="CHEBI:157644"/>
        <dbReference type="ChEBI" id="CHEBI:157653"/>
    </reaction>
    <physiologicalReaction direction="left-to-right" evidence="1">
        <dbReference type="Rhea" id="RHEA:65653"/>
    </physiologicalReaction>
</comment>
<comment type="catalytic activity">
    <reaction evidence="1">
        <text>N-(32-hydroxydotriacontenoyl)-sphing-4-enine + a (9Z,12Z)-octadecadienoyl-containing triacyl-sn-glycerol = an N-(32-(9Z,12Z-octadecadienoyloxy)-dotriacontenoyl)-sphing-4-enine + a diacylglycerol</text>
        <dbReference type="Rhea" id="RHEA:65668"/>
        <dbReference type="ChEBI" id="CHEBI:18035"/>
        <dbReference type="ChEBI" id="CHEBI:144774"/>
        <dbReference type="ChEBI" id="CHEBI:157645"/>
        <dbReference type="ChEBI" id="CHEBI:157657"/>
    </reaction>
    <physiologicalReaction direction="left-to-right" evidence="1">
        <dbReference type="Rhea" id="RHEA:65669"/>
    </physiologicalReaction>
</comment>
<comment type="catalytic activity">
    <reaction evidence="1">
        <text>an N-(34-hydroxytetratriacontenoyl)-sphing-4-enine + a (9Z,12Z)-octadecadienoyl-containing triacyl-sn-glycerol = an N-(34-(9Z,12Z-octadecadienoyloxy)-tetratriacontenoyl)-sphing-4-enine + a diacylglycerol</text>
        <dbReference type="Rhea" id="RHEA:65672"/>
        <dbReference type="ChEBI" id="CHEBI:18035"/>
        <dbReference type="ChEBI" id="CHEBI:144774"/>
        <dbReference type="ChEBI" id="CHEBI:157646"/>
        <dbReference type="ChEBI" id="CHEBI:157656"/>
    </reaction>
    <physiologicalReaction direction="left-to-right" evidence="1">
        <dbReference type="Rhea" id="RHEA:65673"/>
    </physiologicalReaction>
</comment>
<comment type="catalytic activity">
    <reaction evidence="1">
        <text>an N-(34-hydroxytetratriacontadienoyl)-sphing-4-enine + a (9Z,12Z)-octadecadienoyl-containing triacyl-sn-glycerol = an N-(34-(9Z,12Z-octadecadienoyloxy)-tetratriacontadienoyl)-sphing-4-enine + a diacylglycerol</text>
        <dbReference type="Rhea" id="RHEA:65676"/>
        <dbReference type="ChEBI" id="CHEBI:18035"/>
        <dbReference type="ChEBI" id="CHEBI:144774"/>
        <dbReference type="ChEBI" id="CHEBI:157647"/>
        <dbReference type="ChEBI" id="CHEBI:157658"/>
    </reaction>
    <physiologicalReaction direction="left-to-right" evidence="1">
        <dbReference type="Rhea" id="RHEA:65677"/>
    </physiologicalReaction>
</comment>
<comment type="catalytic activity">
    <reaction evidence="1">
        <text>an N-(36-hydroxyhexatriacontenoyl)-sphing-4-enine + a (9Z,12Z)-octadecadienoyl-containing triacyl-sn-glycerol = an N-(36-(9Z,12Z-octadecadienoyloxy)-hexatriacontenoyl)-sphing-4-enine + a diacylglycerol</text>
        <dbReference type="Rhea" id="RHEA:65680"/>
        <dbReference type="ChEBI" id="CHEBI:18035"/>
        <dbReference type="ChEBI" id="CHEBI:144774"/>
        <dbReference type="ChEBI" id="CHEBI:157648"/>
        <dbReference type="ChEBI" id="CHEBI:157659"/>
    </reaction>
    <physiologicalReaction direction="left-to-right" evidence="1">
        <dbReference type="Rhea" id="RHEA:65681"/>
    </physiologicalReaction>
</comment>
<comment type="catalytic activity">
    <reaction evidence="1">
        <text>an N-(36-hydroxyhexatriacontadienoyl)-sphing-4-enine + a (9Z,12Z)-octadecadienoyl-containing triacyl-sn-glycerol = an N-(36-(9Z,12Z-octadecadienoyloxy)-hexatriacontadienoyl)-sphing-4-enine + a diacylglycerol</text>
        <dbReference type="Rhea" id="RHEA:65684"/>
        <dbReference type="ChEBI" id="CHEBI:18035"/>
        <dbReference type="ChEBI" id="CHEBI:144774"/>
        <dbReference type="ChEBI" id="CHEBI:157649"/>
        <dbReference type="ChEBI" id="CHEBI:157660"/>
    </reaction>
    <physiologicalReaction direction="left-to-right" evidence="1">
        <dbReference type="Rhea" id="RHEA:65685"/>
    </physiologicalReaction>
</comment>
<comment type="catalytic activity">
    <reaction evidence="1">
        <text>an N-(38-hydroxyoctatriacontenoyl)-sphing-4-enine + a (9Z,12Z)-octadecadienoyl-containing triacyl-sn-glycerol = an N-(38-(9Z,12Z-octadecadienoyloxy)-octatriacontenoyl)-sphing-4-enine + a diacylglycerol</text>
        <dbReference type="Rhea" id="RHEA:65688"/>
        <dbReference type="ChEBI" id="CHEBI:18035"/>
        <dbReference type="ChEBI" id="CHEBI:144774"/>
        <dbReference type="ChEBI" id="CHEBI:157650"/>
        <dbReference type="ChEBI" id="CHEBI:157661"/>
    </reaction>
    <physiologicalReaction direction="left-to-right" evidence="1">
        <dbReference type="Rhea" id="RHEA:65689"/>
    </physiologicalReaction>
</comment>
<comment type="subcellular location">
    <subcellularLocation>
        <location evidence="7">Cytoplasm</location>
    </subcellularLocation>
</comment>
<comment type="alternative products">
    <event type="alternative splicing"/>
    <isoform>
        <id>Q8N8W4-1</id>
        <name>1</name>
        <sequence type="displayed"/>
    </isoform>
    <isoform>
        <id>Q8N8W4-2</id>
        <name>2</name>
        <sequence type="described" ref="VSP_026371"/>
    </isoform>
    <isoform>
        <id>Q8N8W4-3</id>
        <name>3</name>
        <sequence type="described" ref="VSP_026371 VSP_026372"/>
    </isoform>
</comment>
<comment type="tissue specificity">
    <text evidence="6 7">Expressed in the digestive system. Expressed in the epidermis of skin keratinocytes. Strongly expressed in the granular layer. Expressed in the upper epidermis and eccrine sweat glands of the dermis and in the region of keratin filament bundles, which is more pronounced in upper epidermal layers and in the lower cornified layers.</text>
</comment>
<comment type="induction">
    <text evidence="10">Up-regulated upon induced differentiation of keratinocytes.</text>
</comment>
<comment type="disease" evidence="7 8 11">
    <disease id="DI-03671">
        <name>Ichthyosis, congenital, autosomal recessive 10</name>
        <acronym>ARCI10</acronym>
        <description>A form of autosomal recessive congenital ichthyosis, a disorder of keratinization with abnormal differentiation and desquamation of the epidermis, resulting in abnormal skin scaling over the whole body. The main skin phenotypes are lamellar ichthyosis (LI) and non-bullous congenital ichthyosiform erythroderma (NCIE), although phenotypic overlap within the same patient or among patients from the same family can occur. Lamellar ichthyosis is a condition often associated with an embedment in a collodion-like membrane at birth; skin scales later develop, covering the entire body surface. Non-bullous congenital ichthyosiform erythroderma characterized by fine whitish scaling on an erythrodermal background; larger brownish scales are present on the buttocks, neck and legs.</description>
        <dbReference type="MIM" id="615024"/>
    </disease>
    <text>The disease is caused by variants affecting the gene represented in this entry.</text>
</comment>
<comment type="miscellaneous">
    <molecule>Isoform 2</molecule>
    <text evidence="14">Inactive.</text>
</comment>
<comment type="miscellaneous">
    <molecule>Isoform 3</molecule>
    <text evidence="14">Inactive.</text>
</comment>
<keyword id="KW-0025">Alternative splicing</keyword>
<keyword id="KW-0963">Cytoplasm</keyword>
<keyword id="KW-0225">Disease variant</keyword>
<keyword id="KW-0977">Ichthyosis</keyword>
<keyword id="KW-0444">Lipid biosynthesis</keyword>
<keyword id="KW-0443">Lipid metabolism</keyword>
<keyword id="KW-1185">Reference proteome</keyword>
<keyword id="KW-0808">Transferase</keyword>
<proteinExistence type="evidence at protein level"/>
<reference key="1">
    <citation type="journal article" date="2006" name="J. Lipid Res.">
        <title>Characterization of the human patatin-like phospholipase family.</title>
        <authorList>
            <person name="Wilson P.A."/>
            <person name="Gardner S.D."/>
            <person name="Lambie N.M."/>
            <person name="Commans S.A."/>
            <person name="Crowther D.J."/>
        </authorList>
    </citation>
    <scope>NUCLEOTIDE SEQUENCE [MRNA] (ISOFORM 1)</scope>
    <scope>TISSUE SPECIFICITY</scope>
</reference>
<reference key="2">
    <citation type="journal article" date="2004" name="Nat. Genet.">
        <title>Complete sequencing and characterization of 21,243 full-length human cDNAs.</title>
        <authorList>
            <person name="Ota T."/>
            <person name="Suzuki Y."/>
            <person name="Nishikawa T."/>
            <person name="Otsuki T."/>
            <person name="Sugiyama T."/>
            <person name="Irie R."/>
            <person name="Wakamatsu A."/>
            <person name="Hayashi K."/>
            <person name="Sato H."/>
            <person name="Nagai K."/>
            <person name="Kimura K."/>
            <person name="Makita H."/>
            <person name="Sekine M."/>
            <person name="Obayashi M."/>
            <person name="Nishi T."/>
            <person name="Shibahara T."/>
            <person name="Tanaka T."/>
            <person name="Ishii S."/>
            <person name="Yamamoto J."/>
            <person name="Saito K."/>
            <person name="Kawai Y."/>
            <person name="Isono Y."/>
            <person name="Nakamura Y."/>
            <person name="Nagahari K."/>
            <person name="Murakami K."/>
            <person name="Yasuda T."/>
            <person name="Iwayanagi T."/>
            <person name="Wagatsuma M."/>
            <person name="Shiratori A."/>
            <person name="Sudo H."/>
            <person name="Hosoiri T."/>
            <person name="Kaku Y."/>
            <person name="Kodaira H."/>
            <person name="Kondo H."/>
            <person name="Sugawara M."/>
            <person name="Takahashi M."/>
            <person name="Kanda K."/>
            <person name="Yokoi T."/>
            <person name="Furuya T."/>
            <person name="Kikkawa E."/>
            <person name="Omura Y."/>
            <person name="Abe K."/>
            <person name="Kamihara K."/>
            <person name="Katsuta N."/>
            <person name="Sato K."/>
            <person name="Tanikawa M."/>
            <person name="Yamazaki M."/>
            <person name="Ninomiya K."/>
            <person name="Ishibashi T."/>
            <person name="Yamashita H."/>
            <person name="Murakawa K."/>
            <person name="Fujimori K."/>
            <person name="Tanai H."/>
            <person name="Kimata M."/>
            <person name="Watanabe M."/>
            <person name="Hiraoka S."/>
            <person name="Chiba Y."/>
            <person name="Ishida S."/>
            <person name="Ono Y."/>
            <person name="Takiguchi S."/>
            <person name="Watanabe S."/>
            <person name="Yosida M."/>
            <person name="Hotuta T."/>
            <person name="Kusano J."/>
            <person name="Kanehori K."/>
            <person name="Takahashi-Fujii A."/>
            <person name="Hara H."/>
            <person name="Tanase T.-O."/>
            <person name="Nomura Y."/>
            <person name="Togiya S."/>
            <person name="Komai F."/>
            <person name="Hara R."/>
            <person name="Takeuchi K."/>
            <person name="Arita M."/>
            <person name="Imose N."/>
            <person name="Musashino K."/>
            <person name="Yuuki H."/>
            <person name="Oshima A."/>
            <person name="Sasaki N."/>
            <person name="Aotsuka S."/>
            <person name="Yoshikawa Y."/>
            <person name="Matsunawa H."/>
            <person name="Ichihara T."/>
            <person name="Shiohata N."/>
            <person name="Sano S."/>
            <person name="Moriya S."/>
            <person name="Momiyama H."/>
            <person name="Satoh N."/>
            <person name="Takami S."/>
            <person name="Terashima Y."/>
            <person name="Suzuki O."/>
            <person name="Nakagawa S."/>
            <person name="Senoh A."/>
            <person name="Mizoguchi H."/>
            <person name="Goto Y."/>
            <person name="Shimizu F."/>
            <person name="Wakebe H."/>
            <person name="Hishigaki H."/>
            <person name="Watanabe T."/>
            <person name="Sugiyama A."/>
            <person name="Takemoto M."/>
            <person name="Kawakami B."/>
            <person name="Yamazaki M."/>
            <person name="Watanabe K."/>
            <person name="Kumagai A."/>
            <person name="Itakura S."/>
            <person name="Fukuzumi Y."/>
            <person name="Fujimori Y."/>
            <person name="Komiyama M."/>
            <person name="Tashiro H."/>
            <person name="Tanigami A."/>
            <person name="Fujiwara T."/>
            <person name="Ono T."/>
            <person name="Yamada K."/>
            <person name="Fujii Y."/>
            <person name="Ozaki K."/>
            <person name="Hirao M."/>
            <person name="Ohmori Y."/>
            <person name="Kawabata A."/>
            <person name="Hikiji T."/>
            <person name="Kobatake N."/>
            <person name="Inagaki H."/>
            <person name="Ikema Y."/>
            <person name="Okamoto S."/>
            <person name="Okitani R."/>
            <person name="Kawakami T."/>
            <person name="Noguchi S."/>
            <person name="Itoh T."/>
            <person name="Shigeta K."/>
            <person name="Senba T."/>
            <person name="Matsumura K."/>
            <person name="Nakajima Y."/>
            <person name="Mizuno T."/>
            <person name="Morinaga M."/>
            <person name="Sasaki M."/>
            <person name="Togashi T."/>
            <person name="Oyama M."/>
            <person name="Hata H."/>
            <person name="Watanabe M."/>
            <person name="Komatsu T."/>
            <person name="Mizushima-Sugano J."/>
            <person name="Satoh T."/>
            <person name="Shirai Y."/>
            <person name="Takahashi Y."/>
            <person name="Nakagawa K."/>
            <person name="Okumura K."/>
            <person name="Nagase T."/>
            <person name="Nomura N."/>
            <person name="Kikuchi H."/>
            <person name="Masuho Y."/>
            <person name="Yamashita R."/>
            <person name="Nakai K."/>
            <person name="Yada T."/>
            <person name="Nakamura Y."/>
            <person name="Ohara O."/>
            <person name="Isogai T."/>
            <person name="Sugano S."/>
        </authorList>
    </citation>
    <scope>NUCLEOTIDE SEQUENCE [LARGE SCALE MRNA] (ISOFORM 2)</scope>
    <scope>VARIANT HIS-423</scope>
    <source>
        <tissue>Kidney</tissue>
    </source>
</reference>
<reference key="3">
    <citation type="journal article" date="2003" name="Nature">
        <title>The DNA sequence and analysis of human chromosome 6.</title>
        <authorList>
            <person name="Mungall A.J."/>
            <person name="Palmer S.A."/>
            <person name="Sims S.K."/>
            <person name="Edwards C.A."/>
            <person name="Ashurst J.L."/>
            <person name="Wilming L."/>
            <person name="Jones M.C."/>
            <person name="Horton R."/>
            <person name="Hunt S.E."/>
            <person name="Scott C.E."/>
            <person name="Gilbert J.G.R."/>
            <person name="Clamp M.E."/>
            <person name="Bethel G."/>
            <person name="Milne S."/>
            <person name="Ainscough R."/>
            <person name="Almeida J.P."/>
            <person name="Ambrose K.D."/>
            <person name="Andrews T.D."/>
            <person name="Ashwell R.I.S."/>
            <person name="Babbage A.K."/>
            <person name="Bagguley C.L."/>
            <person name="Bailey J."/>
            <person name="Banerjee R."/>
            <person name="Barker D.J."/>
            <person name="Barlow K.F."/>
            <person name="Bates K."/>
            <person name="Beare D.M."/>
            <person name="Beasley H."/>
            <person name="Beasley O."/>
            <person name="Bird C.P."/>
            <person name="Blakey S.E."/>
            <person name="Bray-Allen S."/>
            <person name="Brook J."/>
            <person name="Brown A.J."/>
            <person name="Brown J.Y."/>
            <person name="Burford D.C."/>
            <person name="Burrill W."/>
            <person name="Burton J."/>
            <person name="Carder C."/>
            <person name="Carter N.P."/>
            <person name="Chapman J.C."/>
            <person name="Clark S.Y."/>
            <person name="Clark G."/>
            <person name="Clee C.M."/>
            <person name="Clegg S."/>
            <person name="Cobley V."/>
            <person name="Collier R.E."/>
            <person name="Collins J.E."/>
            <person name="Colman L.K."/>
            <person name="Corby N.R."/>
            <person name="Coville G.J."/>
            <person name="Culley K.M."/>
            <person name="Dhami P."/>
            <person name="Davies J."/>
            <person name="Dunn M."/>
            <person name="Earthrowl M.E."/>
            <person name="Ellington A.E."/>
            <person name="Evans K.A."/>
            <person name="Faulkner L."/>
            <person name="Francis M.D."/>
            <person name="Frankish A."/>
            <person name="Frankland J."/>
            <person name="French L."/>
            <person name="Garner P."/>
            <person name="Garnett J."/>
            <person name="Ghori M.J."/>
            <person name="Gilby L.M."/>
            <person name="Gillson C.J."/>
            <person name="Glithero R.J."/>
            <person name="Grafham D.V."/>
            <person name="Grant M."/>
            <person name="Gribble S."/>
            <person name="Griffiths C."/>
            <person name="Griffiths M.N.D."/>
            <person name="Hall R."/>
            <person name="Halls K.S."/>
            <person name="Hammond S."/>
            <person name="Harley J.L."/>
            <person name="Hart E.A."/>
            <person name="Heath P.D."/>
            <person name="Heathcott R."/>
            <person name="Holmes S.J."/>
            <person name="Howden P.J."/>
            <person name="Howe K.L."/>
            <person name="Howell G.R."/>
            <person name="Huckle E."/>
            <person name="Humphray S.J."/>
            <person name="Humphries M.D."/>
            <person name="Hunt A.R."/>
            <person name="Johnson C.M."/>
            <person name="Joy A.A."/>
            <person name="Kay M."/>
            <person name="Keenan S.J."/>
            <person name="Kimberley A.M."/>
            <person name="King A."/>
            <person name="Laird G.K."/>
            <person name="Langford C."/>
            <person name="Lawlor S."/>
            <person name="Leongamornlert D.A."/>
            <person name="Leversha M."/>
            <person name="Lloyd C.R."/>
            <person name="Lloyd D.M."/>
            <person name="Loveland J.E."/>
            <person name="Lovell J."/>
            <person name="Martin S."/>
            <person name="Mashreghi-Mohammadi M."/>
            <person name="Maslen G.L."/>
            <person name="Matthews L."/>
            <person name="McCann O.T."/>
            <person name="McLaren S.J."/>
            <person name="McLay K."/>
            <person name="McMurray A."/>
            <person name="Moore M.J.F."/>
            <person name="Mullikin J.C."/>
            <person name="Niblett D."/>
            <person name="Nickerson T."/>
            <person name="Novik K.L."/>
            <person name="Oliver K."/>
            <person name="Overton-Larty E.K."/>
            <person name="Parker A."/>
            <person name="Patel R."/>
            <person name="Pearce A.V."/>
            <person name="Peck A.I."/>
            <person name="Phillimore B.J.C.T."/>
            <person name="Phillips S."/>
            <person name="Plumb R.W."/>
            <person name="Porter K.M."/>
            <person name="Ramsey Y."/>
            <person name="Ranby S.A."/>
            <person name="Rice C.M."/>
            <person name="Ross M.T."/>
            <person name="Searle S.M."/>
            <person name="Sehra H.K."/>
            <person name="Sheridan E."/>
            <person name="Skuce C.D."/>
            <person name="Smith S."/>
            <person name="Smith M."/>
            <person name="Spraggon L."/>
            <person name="Squares S.L."/>
            <person name="Steward C.A."/>
            <person name="Sycamore N."/>
            <person name="Tamlyn-Hall G."/>
            <person name="Tester J."/>
            <person name="Theaker A.J."/>
            <person name="Thomas D.W."/>
            <person name="Thorpe A."/>
            <person name="Tracey A."/>
            <person name="Tromans A."/>
            <person name="Tubby B."/>
            <person name="Wall M."/>
            <person name="Wallis J.M."/>
            <person name="West A.P."/>
            <person name="White S.S."/>
            <person name="Whitehead S.L."/>
            <person name="Whittaker H."/>
            <person name="Wild A."/>
            <person name="Willey D.J."/>
            <person name="Wilmer T.E."/>
            <person name="Wood J.M."/>
            <person name="Wray P.W."/>
            <person name="Wyatt J.C."/>
            <person name="Young L."/>
            <person name="Younger R.M."/>
            <person name="Bentley D.R."/>
            <person name="Coulson A."/>
            <person name="Durbin R.M."/>
            <person name="Hubbard T."/>
            <person name="Sulston J.E."/>
            <person name="Dunham I."/>
            <person name="Rogers J."/>
            <person name="Beck S."/>
        </authorList>
    </citation>
    <scope>NUCLEOTIDE SEQUENCE [LARGE SCALE GENOMIC DNA]</scope>
</reference>
<reference key="4">
    <citation type="journal article" date="2004" name="Genome Res.">
        <title>The status, quality, and expansion of the NIH full-length cDNA project: the Mammalian Gene Collection (MGC).</title>
        <authorList>
            <consortium name="The MGC Project Team"/>
        </authorList>
    </citation>
    <scope>NUCLEOTIDE SEQUENCE [LARGE SCALE MRNA] (ISOFORMS 2 AND 3)</scope>
    <scope>VARIANTS HIS-423; MET-490 AND PRO-522</scope>
</reference>
<reference key="5">
    <citation type="journal article" date="2012" name="Nat. Genet.">
        <title>PNPLA1 mutations cause autosomal recessive congenital ichthyosis in golden retriever dogs and humans.</title>
        <authorList>
            <person name="Grall A."/>
            <person name="Guaguere E."/>
            <person name="Planchais S."/>
            <person name="Grond S."/>
            <person name="Bourrat E."/>
            <person name="Hausser I."/>
            <person name="Hitte C."/>
            <person name="Le Gallo M."/>
            <person name="Derbois C."/>
            <person name="Kim G.J."/>
            <person name="Lagoutte L."/>
            <person name="Degorce-Rubiales F."/>
            <person name="Radner F.P."/>
            <person name="Thomas A."/>
            <person name="Kuery S."/>
            <person name="Bensignor E."/>
            <person name="Fontaine J."/>
            <person name="Pin D."/>
            <person name="Zimmermann R."/>
            <person name="Zechner R."/>
            <person name="Lathrop M."/>
            <person name="Galibert F."/>
            <person name="Andre C."/>
            <person name="Fischer J."/>
        </authorList>
    </citation>
    <scope>FUNCTION</scope>
    <scope>SUBCELLULAR LOCATION</scope>
    <scope>TISSUE SPECIFICITY</scope>
    <scope>INVOLVEMENT IN ARCI10</scope>
    <scope>VARIANTS ARCI10 VAL-59 AND 131-GLU--GLN-532 DEL</scope>
</reference>
<reference key="6">
    <citation type="journal article" date="2017" name="J. Invest. Dermatol.">
        <title>PNPLA1 Deficiency in Mice and Humans Leads to a Defect in the Synthesis of Omega-O-Acylceramides.</title>
        <authorList>
            <person name="Grond S."/>
            <person name="Eichmann T.O."/>
            <person name="Dubrac S."/>
            <person name="Kolb D."/>
            <person name="Schmuth M."/>
            <person name="Fischer J."/>
            <person name="Crumrine D."/>
            <person name="Elias P.M."/>
            <person name="Haemmerle G."/>
            <person name="Zechner R."/>
            <person name="Lass A."/>
            <person name="Radner F.P.W."/>
        </authorList>
    </citation>
    <scope>FUNCTION</scope>
    <scope>CATALYTIC ACTIVITY</scope>
</reference>
<reference key="7">
    <citation type="journal article" date="2017" name="Nat. Commun.">
        <title>PNPLA1 has a crucial role in skin barrier function by directing acylceramide biosynthesis.</title>
        <authorList>
            <person name="Hirabayashi T."/>
            <person name="Anjo T."/>
            <person name="Kaneko A."/>
            <person name="Senoo Y."/>
            <person name="Shibata A."/>
            <person name="Takama H."/>
            <person name="Yokoyama K."/>
            <person name="Nishito Y."/>
            <person name="Ono T."/>
            <person name="Taya C."/>
            <person name="Muramatsu K."/>
            <person name="Fukami K."/>
            <person name="Munoz-Garcia A."/>
            <person name="Brash A.R."/>
            <person name="Ikeda K."/>
            <person name="Arita M."/>
            <person name="Akiyama M."/>
            <person name="Murakami M."/>
        </authorList>
    </citation>
    <scope>INDUCTION</scope>
</reference>
<reference key="8">
    <citation type="journal article" date="2017" name="Nat. Commun.">
        <title>PNPLA1 is a transacylase essential for the generation of the skin barrier lipid omega-O-acylceramide.</title>
        <authorList>
            <person name="Ohno Y."/>
            <person name="Kamiyama N."/>
            <person name="Nakamichi S."/>
            <person name="Kihara A."/>
        </authorList>
    </citation>
    <scope>FUNCTION</scope>
    <scope>CATALYTIC ACTIVITY</scope>
    <scope>CHARACTERIZATION OF VARIANTS ARCI10 THR-34; VAL-59 AND 131-GLU--GLN-532 DEL</scope>
</reference>
<reference key="9">
    <citation type="journal article" date="2014" name="Br. J. Dermatol.">
        <title>Identification of a novel PNPLA1 mutation in a Spanish family with autosomal recessive congenital ichthyosis.</title>
        <authorList>
            <person name="Fachal L."/>
            <person name="Rodriguez-Pazos L."/>
            <person name="Ginarte M."/>
            <person name="Carracedo A."/>
            <person name="Toribio J."/>
            <person name="Vega A."/>
        </authorList>
    </citation>
    <scope>VARIANT ARCI10 THR-34</scope>
</reference>
<feature type="chain" id="PRO_0000292019" description="Omega-hydroxyceramide transacylase">
    <location>
        <begin position="1"/>
        <end position="532"/>
    </location>
</feature>
<feature type="domain" description="PNPLA" evidence="2">
    <location>
        <begin position="16"/>
        <end position="185"/>
    </location>
</feature>
<feature type="region of interest" description="Disordered" evidence="3">
    <location>
        <begin position="290"/>
        <end position="457"/>
    </location>
</feature>
<feature type="region of interest" description="Disordered" evidence="3">
    <location>
        <begin position="489"/>
        <end position="532"/>
    </location>
</feature>
<feature type="short sequence motif" description="GXSXG" evidence="2">
    <location>
        <begin position="51"/>
        <end position="55"/>
    </location>
</feature>
<feature type="short sequence motif" description="DGA/G" evidence="2">
    <location>
        <begin position="172"/>
        <end position="174"/>
    </location>
</feature>
<feature type="compositionally biased region" description="Basic and acidic residues" evidence="3">
    <location>
        <begin position="310"/>
        <end position="322"/>
    </location>
</feature>
<feature type="compositionally biased region" description="Low complexity" evidence="3">
    <location>
        <begin position="380"/>
        <end position="389"/>
    </location>
</feature>
<feature type="compositionally biased region" description="Low complexity" evidence="3">
    <location>
        <begin position="397"/>
        <end position="411"/>
    </location>
</feature>
<feature type="compositionally biased region" description="Basic residues" evidence="3">
    <location>
        <begin position="517"/>
        <end position="532"/>
    </location>
</feature>
<feature type="active site" description="Nucleophile" evidence="2">
    <location>
        <position position="53"/>
    </location>
</feature>
<feature type="active site" description="Proton acceptor" evidence="2">
    <location>
        <position position="172"/>
    </location>
</feature>
<feature type="splice variant" id="VSP_026371" description="In isoform 2 and isoform 3." evidence="12 13">
    <location>
        <begin position="1"/>
        <end position="95"/>
    </location>
</feature>
<feature type="splice variant" id="VSP_026372" description="In isoform 3." evidence="13">
    <original>V</original>
    <variation>VWAFLTLPPQ</variation>
    <location>
        <position position="168"/>
    </location>
</feature>
<feature type="sequence variant" id="VAR_084012" description="In ARCI10; decreased omega-hydroxyceramide transacylase activity; dbSNP:rs1182312612." evidence="8 11">
    <original>A</original>
    <variation>T</variation>
    <location>
        <position position="34"/>
    </location>
</feature>
<feature type="sequence variant" id="VAR_069566" description="In ARCI10; decreased omega-hydroxyceramide transacylase activity; dbSNP:rs1561853847." evidence="7 11">
    <original>A</original>
    <variation>V</variation>
    <location>
        <position position="59"/>
    </location>
</feature>
<feature type="sequence variant" id="VAR_084013" description="In ARCI10; loss of omega-hydroxyceramide transacylase activity; dbSNP:rs1561864453." evidence="7 11">
    <location>
        <begin position="131"/>
        <end position="532"/>
    </location>
</feature>
<feature type="sequence variant" id="VAR_032929" description="In dbSNP:rs12199580." evidence="4 5">
    <original>P</original>
    <variation>H</variation>
    <location>
        <position position="423"/>
    </location>
</feature>
<feature type="sequence variant" id="VAR_032930" description="In dbSNP:rs12197079." evidence="5">
    <original>T</original>
    <variation>M</variation>
    <location>
        <position position="490"/>
    </location>
</feature>
<feature type="sequence variant" id="VAR_032931" description="In dbSNP:rs4713956." evidence="5">
    <original>S</original>
    <variation>P</variation>
    <location>
        <position position="522"/>
    </location>
</feature>
<feature type="sequence conflict" description="In Ref. 1; CAJ58679." evidence="14" ref="1">
    <original>A</original>
    <variation>AA</variation>
    <location>
        <position position="147"/>
    </location>
</feature>
<accession>Q8N8W4</accession>
<accession>A3RMU3</accession>
<accession>J3JS20</accession>
<accession>Q2A6N1</accession>
<accession>Q3SY95</accession>
<accession>Q3SY96</accession>
<accession>Q5R3L2</accession>
<organism>
    <name type="scientific">Homo sapiens</name>
    <name type="common">Human</name>
    <dbReference type="NCBI Taxonomy" id="9606"/>
    <lineage>
        <taxon>Eukaryota</taxon>
        <taxon>Metazoa</taxon>
        <taxon>Chordata</taxon>
        <taxon>Craniata</taxon>
        <taxon>Vertebrata</taxon>
        <taxon>Euteleostomi</taxon>
        <taxon>Mammalia</taxon>
        <taxon>Eutheria</taxon>
        <taxon>Euarchontoglires</taxon>
        <taxon>Primates</taxon>
        <taxon>Haplorrhini</taxon>
        <taxon>Catarrhini</taxon>
        <taxon>Hominidae</taxon>
        <taxon>Homo</taxon>
    </lineage>
</organism>